<proteinExistence type="inferred from homology"/>
<evidence type="ECO:0000250" key="1">
    <source>
        <dbReference type="UniProtKB" id="P03897"/>
    </source>
</evidence>
<evidence type="ECO:0000250" key="2">
    <source>
        <dbReference type="UniProtKB" id="P03898"/>
    </source>
</evidence>
<evidence type="ECO:0000255" key="3"/>
<evidence type="ECO:0000305" key="4"/>
<name>NU3M_REIFU</name>
<gene>
    <name evidence="1" type="primary">MT-ND3</name>
    <name type="synonym">MTND3</name>
    <name type="synonym">NADH3</name>
    <name type="synonym">ND3</name>
</gene>
<reference key="1">
    <citation type="journal article" date="1998" name="Mol. Biol. Evol.">
        <title>Molecular systematics and paleobiogeography of the South American sigmodontine rodents.</title>
        <authorList>
            <person name="Engel S.R."/>
            <person name="Hogan K.M."/>
            <person name="Taylor J.F."/>
            <person name="Davis S.K."/>
        </authorList>
    </citation>
    <scope>NUCLEOTIDE SEQUENCE [GENOMIC DNA]</scope>
</reference>
<protein>
    <recommendedName>
        <fullName evidence="1">NADH-ubiquinone oxidoreductase chain 3</fullName>
        <ecNumber evidence="1">7.1.1.2</ecNumber>
    </recommendedName>
    <alternativeName>
        <fullName>NADH dehydrogenase subunit 3</fullName>
    </alternativeName>
</protein>
<keyword id="KW-0249">Electron transport</keyword>
<keyword id="KW-0472">Membrane</keyword>
<keyword id="KW-0496">Mitochondrion</keyword>
<keyword id="KW-0999">Mitochondrion inner membrane</keyword>
<keyword id="KW-0520">NAD</keyword>
<keyword id="KW-0679">Respiratory chain</keyword>
<keyword id="KW-1278">Translocase</keyword>
<keyword id="KW-0812">Transmembrane</keyword>
<keyword id="KW-1133">Transmembrane helix</keyword>
<keyword id="KW-0813">Transport</keyword>
<keyword id="KW-0830">Ubiquinone</keyword>
<accession>O21592</accession>
<feature type="chain" id="PRO_0000117821" description="NADH-ubiquinone oxidoreductase chain 3">
    <location>
        <begin position="1"/>
        <end position="115"/>
    </location>
</feature>
<feature type="transmembrane region" description="Helical" evidence="3">
    <location>
        <begin position="4"/>
        <end position="24"/>
    </location>
</feature>
<feature type="transmembrane region" description="Helical" evidence="3">
    <location>
        <begin position="55"/>
        <end position="75"/>
    </location>
</feature>
<feature type="transmembrane region" description="Helical" evidence="3">
    <location>
        <begin position="86"/>
        <end position="106"/>
    </location>
</feature>
<organism>
    <name type="scientific">Reithrodontomys fulvescens</name>
    <name type="common">Fulvous harvest mouse</name>
    <dbReference type="NCBI Taxonomy" id="56213"/>
    <lineage>
        <taxon>Eukaryota</taxon>
        <taxon>Metazoa</taxon>
        <taxon>Chordata</taxon>
        <taxon>Craniata</taxon>
        <taxon>Vertebrata</taxon>
        <taxon>Euteleostomi</taxon>
        <taxon>Mammalia</taxon>
        <taxon>Eutheria</taxon>
        <taxon>Euarchontoglires</taxon>
        <taxon>Glires</taxon>
        <taxon>Rodentia</taxon>
        <taxon>Myomorpha</taxon>
        <taxon>Muroidea</taxon>
        <taxon>Cricetidae</taxon>
        <taxon>Neotominae</taxon>
        <taxon>Reithrodontomys</taxon>
    </lineage>
</organism>
<dbReference type="EC" id="7.1.1.2" evidence="1"/>
<dbReference type="EMBL" id="U83832">
    <property type="protein sequence ID" value="AAB87232.1"/>
    <property type="molecule type" value="Genomic_DNA"/>
</dbReference>
<dbReference type="SMR" id="O21592"/>
<dbReference type="GO" id="GO:0005743">
    <property type="term" value="C:mitochondrial inner membrane"/>
    <property type="evidence" value="ECO:0000250"/>
    <property type="project" value="UniProtKB"/>
</dbReference>
<dbReference type="GO" id="GO:0030964">
    <property type="term" value="C:NADH dehydrogenase complex"/>
    <property type="evidence" value="ECO:0007669"/>
    <property type="project" value="TreeGrafter"/>
</dbReference>
<dbReference type="GO" id="GO:0008137">
    <property type="term" value="F:NADH dehydrogenase (ubiquinone) activity"/>
    <property type="evidence" value="ECO:0000250"/>
    <property type="project" value="UniProtKB"/>
</dbReference>
<dbReference type="GO" id="GO:0006120">
    <property type="term" value="P:mitochondrial electron transport, NADH to ubiquinone"/>
    <property type="evidence" value="ECO:0000250"/>
    <property type="project" value="UniProtKB"/>
</dbReference>
<dbReference type="FunFam" id="1.20.58.1610:FF:000004">
    <property type="entry name" value="NADH-quinone oxidoreductase subunit A"/>
    <property type="match status" value="1"/>
</dbReference>
<dbReference type="Gene3D" id="1.20.58.1610">
    <property type="entry name" value="NADH:ubiquinone/plastoquinone oxidoreductase, chain 3"/>
    <property type="match status" value="1"/>
</dbReference>
<dbReference type="InterPro" id="IPR000440">
    <property type="entry name" value="NADH_UbQ/plastoQ_OxRdtase_su3"/>
</dbReference>
<dbReference type="InterPro" id="IPR038430">
    <property type="entry name" value="NDAH_ubi_oxred_su3_sf"/>
</dbReference>
<dbReference type="PANTHER" id="PTHR11058">
    <property type="entry name" value="NADH-UBIQUINONE OXIDOREDUCTASE CHAIN 3"/>
    <property type="match status" value="1"/>
</dbReference>
<dbReference type="PANTHER" id="PTHR11058:SF9">
    <property type="entry name" value="NADH-UBIQUINONE OXIDOREDUCTASE CHAIN 3"/>
    <property type="match status" value="1"/>
</dbReference>
<dbReference type="Pfam" id="PF00507">
    <property type="entry name" value="Oxidored_q4"/>
    <property type="match status" value="1"/>
</dbReference>
<sequence length="115" mass="13266">MNMFIVMMINIILSMSLIIIAFWLPQLNLYTEKANPYECGFDPMSSARLPFSMKFFLVAITFLLFDLEIALLLPLPWAIQIPNIKITMLTAFILVTVLALGLAYEWMQKGLEWTE</sequence>
<comment type="function">
    <text evidence="1">Core subunit of the mitochondrial membrane respiratory chain NADH dehydrogenase (Complex I) which catalyzes electron transfer from NADH through the respiratory chain, using ubiquinone as an electron acceptor. Essential for the catalytic activity of complex I.</text>
</comment>
<comment type="catalytic activity">
    <reaction evidence="1">
        <text>a ubiquinone + NADH + 5 H(+)(in) = a ubiquinol + NAD(+) + 4 H(+)(out)</text>
        <dbReference type="Rhea" id="RHEA:29091"/>
        <dbReference type="Rhea" id="RHEA-COMP:9565"/>
        <dbReference type="Rhea" id="RHEA-COMP:9566"/>
        <dbReference type="ChEBI" id="CHEBI:15378"/>
        <dbReference type="ChEBI" id="CHEBI:16389"/>
        <dbReference type="ChEBI" id="CHEBI:17976"/>
        <dbReference type="ChEBI" id="CHEBI:57540"/>
        <dbReference type="ChEBI" id="CHEBI:57945"/>
        <dbReference type="EC" id="7.1.1.2"/>
    </reaction>
</comment>
<comment type="subunit">
    <text evidence="1">Core subunit of respiratory chain NADH dehydrogenase (Complex I) which is composed of 45 different subunits. Interacts with TMEM186. Interacts with TMEM242 (By similarity).</text>
</comment>
<comment type="subcellular location">
    <subcellularLocation>
        <location evidence="2">Mitochondrion inner membrane</location>
        <topology evidence="3">Multi-pass membrane protein</topology>
    </subcellularLocation>
</comment>
<comment type="similarity">
    <text evidence="4">Belongs to the complex I subunit 3 family.</text>
</comment>
<geneLocation type="mitochondrion"/>